<feature type="chain" id="PRO_1000212615" description="Probable transcriptional regulatory protein Kole_1935">
    <location>
        <begin position="1"/>
        <end position="252"/>
    </location>
</feature>
<organism>
    <name type="scientific">Kosmotoga olearia (strain ATCC BAA-1733 / DSM 21960 / TBF 19.5.1)</name>
    <dbReference type="NCBI Taxonomy" id="521045"/>
    <lineage>
        <taxon>Bacteria</taxon>
        <taxon>Thermotogati</taxon>
        <taxon>Thermotogota</taxon>
        <taxon>Thermotogae</taxon>
        <taxon>Kosmotogales</taxon>
        <taxon>Kosmotogaceae</taxon>
        <taxon>Kosmotoga</taxon>
    </lineage>
</organism>
<comment type="subcellular location">
    <subcellularLocation>
        <location evidence="1">Cytoplasm</location>
    </subcellularLocation>
</comment>
<comment type="similarity">
    <text evidence="1">Belongs to the TACO1 family.</text>
</comment>
<name>Y1935_KOSOT</name>
<dbReference type="EMBL" id="CP001634">
    <property type="protein sequence ID" value="ACR80616.1"/>
    <property type="molecule type" value="Genomic_DNA"/>
</dbReference>
<dbReference type="RefSeq" id="WP_015869259.1">
    <property type="nucleotide sequence ID" value="NC_012785.1"/>
</dbReference>
<dbReference type="SMR" id="C5CGU7"/>
<dbReference type="STRING" id="521045.Kole_1935"/>
<dbReference type="KEGG" id="kol:Kole_1935"/>
<dbReference type="eggNOG" id="COG0217">
    <property type="taxonomic scope" value="Bacteria"/>
</dbReference>
<dbReference type="HOGENOM" id="CLU_062974_2_2_0"/>
<dbReference type="OrthoDB" id="9781053at2"/>
<dbReference type="Proteomes" id="UP000002382">
    <property type="component" value="Chromosome"/>
</dbReference>
<dbReference type="GO" id="GO:0005829">
    <property type="term" value="C:cytosol"/>
    <property type="evidence" value="ECO:0007669"/>
    <property type="project" value="TreeGrafter"/>
</dbReference>
<dbReference type="GO" id="GO:0003677">
    <property type="term" value="F:DNA binding"/>
    <property type="evidence" value="ECO:0007669"/>
    <property type="project" value="UniProtKB-UniRule"/>
</dbReference>
<dbReference type="GO" id="GO:0006355">
    <property type="term" value="P:regulation of DNA-templated transcription"/>
    <property type="evidence" value="ECO:0007669"/>
    <property type="project" value="UniProtKB-UniRule"/>
</dbReference>
<dbReference type="FunFam" id="1.10.10.200:FF:000002">
    <property type="entry name" value="Probable transcriptional regulatory protein CLM62_37755"/>
    <property type="match status" value="1"/>
</dbReference>
<dbReference type="Gene3D" id="1.10.10.200">
    <property type="match status" value="1"/>
</dbReference>
<dbReference type="Gene3D" id="3.30.70.980">
    <property type="match status" value="2"/>
</dbReference>
<dbReference type="HAMAP" id="MF_00693">
    <property type="entry name" value="Transcrip_reg_TACO1"/>
    <property type="match status" value="1"/>
</dbReference>
<dbReference type="InterPro" id="IPR017856">
    <property type="entry name" value="Integrase-like_N"/>
</dbReference>
<dbReference type="InterPro" id="IPR048300">
    <property type="entry name" value="TACO1_YebC-like_2nd/3rd_dom"/>
</dbReference>
<dbReference type="InterPro" id="IPR049083">
    <property type="entry name" value="TACO1_YebC_N"/>
</dbReference>
<dbReference type="InterPro" id="IPR002876">
    <property type="entry name" value="Transcrip_reg_TACO1-like"/>
</dbReference>
<dbReference type="InterPro" id="IPR026564">
    <property type="entry name" value="Transcrip_reg_TACO1-like_dom3"/>
</dbReference>
<dbReference type="InterPro" id="IPR029072">
    <property type="entry name" value="YebC-like"/>
</dbReference>
<dbReference type="NCBIfam" id="NF001030">
    <property type="entry name" value="PRK00110.1"/>
    <property type="match status" value="1"/>
</dbReference>
<dbReference type="NCBIfam" id="NF009044">
    <property type="entry name" value="PRK12378.1"/>
    <property type="match status" value="1"/>
</dbReference>
<dbReference type="NCBIfam" id="TIGR01033">
    <property type="entry name" value="YebC/PmpR family DNA-binding transcriptional regulator"/>
    <property type="match status" value="1"/>
</dbReference>
<dbReference type="PANTHER" id="PTHR12532:SF6">
    <property type="entry name" value="TRANSCRIPTIONAL REGULATORY PROTEIN YEBC-RELATED"/>
    <property type="match status" value="1"/>
</dbReference>
<dbReference type="PANTHER" id="PTHR12532">
    <property type="entry name" value="TRANSLATIONAL ACTIVATOR OF CYTOCHROME C OXIDASE 1"/>
    <property type="match status" value="1"/>
</dbReference>
<dbReference type="Pfam" id="PF20772">
    <property type="entry name" value="TACO1_YebC_N"/>
    <property type="match status" value="1"/>
</dbReference>
<dbReference type="Pfam" id="PF01709">
    <property type="entry name" value="Transcrip_reg"/>
    <property type="match status" value="1"/>
</dbReference>
<dbReference type="SUPFAM" id="SSF75625">
    <property type="entry name" value="YebC-like"/>
    <property type="match status" value="1"/>
</dbReference>
<keyword id="KW-0963">Cytoplasm</keyword>
<keyword id="KW-0238">DNA-binding</keyword>
<keyword id="KW-1185">Reference proteome</keyword>
<keyword id="KW-0804">Transcription</keyword>
<keyword id="KW-0805">Transcription regulation</keyword>
<protein>
    <recommendedName>
        <fullName evidence="1">Probable transcriptional regulatory protein Kole_1935</fullName>
    </recommendedName>
</protein>
<reference key="1">
    <citation type="submission" date="2009-06" db="EMBL/GenBank/DDBJ databases">
        <title>Complete sequence of Thermotogales bacterium TBF 19.5.1.</title>
        <authorList>
            <consortium name="US DOE Joint Genome Institute"/>
            <person name="Lucas S."/>
            <person name="Copeland A."/>
            <person name="Lapidus A."/>
            <person name="Glavina del Rio T."/>
            <person name="Tice H."/>
            <person name="Bruce D."/>
            <person name="Goodwin L."/>
            <person name="Pitluck S."/>
            <person name="Chertkov O."/>
            <person name="Brettin T."/>
            <person name="Detter J.C."/>
            <person name="Han C."/>
            <person name="Schmutz J."/>
            <person name="Larimer F."/>
            <person name="Land M."/>
            <person name="Hauser L."/>
            <person name="Kyrpides N."/>
            <person name="Ovchinnikova G."/>
            <person name="Noll K."/>
        </authorList>
    </citation>
    <scope>NUCLEOTIDE SEQUENCE [LARGE SCALE GENOMIC DNA]</scope>
    <source>
        <strain>ATCC BAA-1733 / DSM 21960 / TBF 19.5.1</strain>
    </source>
</reference>
<evidence type="ECO:0000255" key="1">
    <source>
        <dbReference type="HAMAP-Rule" id="MF_00693"/>
    </source>
</evidence>
<proteinExistence type="inferred from homology"/>
<sequence>MSGHNKWANIKHRKMAQDAKKSKIFTKIIRELMVAAREGGTDPNTNNALRAAIERAKAANMPKDTMEKAIKKGAGELEGQSFVEALYEVYAPGGVAMLIRALTDNKNRTAQEIRHLLSKHGGNMAESGSVAWMFERKGVITVPRSEISDMDEFQLLAIDAGAEDIQDEEDPVRIITAPEEASNVKNALEENGYTASYELTYIPKNTVSVSGNDAEKLLKLLNVLEDNDDVQEVYANFEMDDSEMEALMEKMQ</sequence>
<gene>
    <name type="ordered locus">Kole_1935</name>
</gene>
<accession>C5CGU7</accession>